<feature type="chain" id="PRO_1000060227" description="Ketol-acid reductoisomerase (NADP(+))">
    <location>
        <begin position="1"/>
        <end position="329"/>
    </location>
</feature>
<feature type="domain" description="KARI N-terminal Rossmann" evidence="2">
    <location>
        <begin position="2"/>
        <end position="182"/>
    </location>
</feature>
<feature type="domain" description="KARI C-terminal knotted" evidence="3">
    <location>
        <begin position="183"/>
        <end position="328"/>
    </location>
</feature>
<feature type="active site" evidence="1">
    <location>
        <position position="108"/>
    </location>
</feature>
<feature type="binding site" evidence="1">
    <location>
        <begin position="25"/>
        <end position="28"/>
    </location>
    <ligand>
        <name>NADP(+)</name>
        <dbReference type="ChEBI" id="CHEBI:58349"/>
    </ligand>
</feature>
<feature type="binding site" evidence="1">
    <location>
        <position position="51"/>
    </location>
    <ligand>
        <name>NADP(+)</name>
        <dbReference type="ChEBI" id="CHEBI:58349"/>
    </ligand>
</feature>
<feature type="binding site" evidence="1">
    <location>
        <position position="53"/>
    </location>
    <ligand>
        <name>NADP(+)</name>
        <dbReference type="ChEBI" id="CHEBI:58349"/>
    </ligand>
</feature>
<feature type="binding site" evidence="1">
    <location>
        <begin position="83"/>
        <end position="86"/>
    </location>
    <ligand>
        <name>NADP(+)</name>
        <dbReference type="ChEBI" id="CHEBI:58349"/>
    </ligand>
</feature>
<feature type="binding site" evidence="1">
    <location>
        <position position="134"/>
    </location>
    <ligand>
        <name>NADP(+)</name>
        <dbReference type="ChEBI" id="CHEBI:58349"/>
    </ligand>
</feature>
<feature type="binding site" evidence="1">
    <location>
        <position position="191"/>
    </location>
    <ligand>
        <name>Mg(2+)</name>
        <dbReference type="ChEBI" id="CHEBI:18420"/>
        <label>1</label>
    </ligand>
</feature>
<feature type="binding site" evidence="1">
    <location>
        <position position="191"/>
    </location>
    <ligand>
        <name>Mg(2+)</name>
        <dbReference type="ChEBI" id="CHEBI:18420"/>
        <label>2</label>
    </ligand>
</feature>
<feature type="binding site" evidence="1">
    <location>
        <position position="195"/>
    </location>
    <ligand>
        <name>Mg(2+)</name>
        <dbReference type="ChEBI" id="CHEBI:18420"/>
        <label>1</label>
    </ligand>
</feature>
<feature type="binding site" evidence="1">
    <location>
        <position position="227"/>
    </location>
    <ligand>
        <name>Mg(2+)</name>
        <dbReference type="ChEBI" id="CHEBI:18420"/>
        <label>2</label>
    </ligand>
</feature>
<feature type="binding site" evidence="1">
    <location>
        <position position="231"/>
    </location>
    <ligand>
        <name>Mg(2+)</name>
        <dbReference type="ChEBI" id="CHEBI:18420"/>
        <label>2</label>
    </ligand>
</feature>
<feature type="binding site" evidence="1">
    <location>
        <position position="252"/>
    </location>
    <ligand>
        <name>substrate</name>
    </ligand>
</feature>
<accession>Q18C83</accession>
<proteinExistence type="inferred from homology"/>
<reference key="1">
    <citation type="journal article" date="2006" name="Nat. Genet.">
        <title>The multidrug-resistant human pathogen Clostridium difficile has a highly mobile, mosaic genome.</title>
        <authorList>
            <person name="Sebaihia M."/>
            <person name="Wren B.W."/>
            <person name="Mullany P."/>
            <person name="Fairweather N.F."/>
            <person name="Minton N."/>
            <person name="Stabler R."/>
            <person name="Thomson N.R."/>
            <person name="Roberts A.P."/>
            <person name="Cerdeno-Tarraga A.M."/>
            <person name="Wang H."/>
            <person name="Holden M.T.G."/>
            <person name="Wright A."/>
            <person name="Churcher C."/>
            <person name="Quail M.A."/>
            <person name="Baker S."/>
            <person name="Bason N."/>
            <person name="Brooks K."/>
            <person name="Chillingworth T."/>
            <person name="Cronin A."/>
            <person name="Davis P."/>
            <person name="Dowd L."/>
            <person name="Fraser A."/>
            <person name="Feltwell T."/>
            <person name="Hance Z."/>
            <person name="Holroyd S."/>
            <person name="Jagels K."/>
            <person name="Moule S."/>
            <person name="Mungall K."/>
            <person name="Price C."/>
            <person name="Rabbinowitsch E."/>
            <person name="Sharp S."/>
            <person name="Simmonds M."/>
            <person name="Stevens K."/>
            <person name="Unwin L."/>
            <person name="Whithead S."/>
            <person name="Dupuy B."/>
            <person name="Dougan G."/>
            <person name="Barrell B."/>
            <person name="Parkhill J."/>
        </authorList>
    </citation>
    <scope>NUCLEOTIDE SEQUENCE [LARGE SCALE GENOMIC DNA]</scope>
    <source>
        <strain>630</strain>
    </source>
</reference>
<organism>
    <name type="scientific">Clostridioides difficile (strain 630)</name>
    <name type="common">Peptoclostridium difficile</name>
    <dbReference type="NCBI Taxonomy" id="272563"/>
    <lineage>
        <taxon>Bacteria</taxon>
        <taxon>Bacillati</taxon>
        <taxon>Bacillota</taxon>
        <taxon>Clostridia</taxon>
        <taxon>Peptostreptococcales</taxon>
        <taxon>Peptostreptococcaceae</taxon>
        <taxon>Clostridioides</taxon>
    </lineage>
</organism>
<protein>
    <recommendedName>
        <fullName evidence="1">Ketol-acid reductoisomerase (NADP(+))</fullName>
        <shortName evidence="1">KARI</shortName>
        <ecNumber evidence="1">1.1.1.86</ecNumber>
    </recommendedName>
    <alternativeName>
        <fullName evidence="1">Acetohydroxy-acid isomeroreductase</fullName>
        <shortName evidence="1">AHIR</shortName>
    </alternativeName>
    <alternativeName>
        <fullName evidence="1">Alpha-keto-beta-hydroxylacyl reductoisomerase</fullName>
    </alternativeName>
    <alternativeName>
        <fullName evidence="1">Ketol-acid reductoisomerase type 1</fullName>
    </alternativeName>
    <alternativeName>
        <fullName evidence="1">Ketol-acid reductoisomerase type I</fullName>
    </alternativeName>
</protein>
<evidence type="ECO:0000255" key="1">
    <source>
        <dbReference type="HAMAP-Rule" id="MF_00435"/>
    </source>
</evidence>
<evidence type="ECO:0000255" key="2">
    <source>
        <dbReference type="PROSITE-ProRule" id="PRU01197"/>
    </source>
</evidence>
<evidence type="ECO:0000255" key="3">
    <source>
        <dbReference type="PROSITE-ProRule" id="PRU01198"/>
    </source>
</evidence>
<name>ILVC_CLOD6</name>
<gene>
    <name evidence="1" type="primary">ilvC</name>
    <name type="ordered locus">CD630_15650</name>
</gene>
<sequence length="329" mass="36878">MARMYYEKDVDLEVLKNKKVAVLGYGSQGHAHAQNLRDNGVHVMIGLYDGSKSAQKAKEDGFEVKSVAEATKESDLTMMLMPDEKQKKVYEESVKDNLKEGQTLAFAHGFNIHYNQVQPPEFVDVVMVAPKGPGHLVRNVFTKGSGVPALFAVYQDHTKKATETVLAYAKGIGATRAGVLETTFKEETETDLFGEQSVLCGGISELIKLGYKTLVDAGYQKEVAYFECLHEMKLIVDLIYEGGFERMRYSISDTAEYGDYVSGKRVITDAAKQGMQNVLEDIQNGKFAKAWIKENEEGRENFLKTREEEYNTEIAEVGRNLRSMMSFLK</sequence>
<dbReference type="EC" id="1.1.1.86" evidence="1"/>
<dbReference type="EMBL" id="AM180355">
    <property type="protein sequence ID" value="CAJ68429.1"/>
    <property type="molecule type" value="Genomic_DNA"/>
</dbReference>
<dbReference type="RefSeq" id="YP_001088065.1">
    <property type="nucleotide sequence ID" value="NC_009089.1"/>
</dbReference>
<dbReference type="SMR" id="Q18C83"/>
<dbReference type="STRING" id="272563.CD630_15650"/>
<dbReference type="EnsemblBacteria" id="CAJ68429">
    <property type="protein sequence ID" value="CAJ68429"/>
    <property type="gene ID" value="CD630_15650"/>
</dbReference>
<dbReference type="KEGG" id="cdf:CD630_15650"/>
<dbReference type="KEGG" id="pdc:CDIF630_01734"/>
<dbReference type="PATRIC" id="fig|272563.120.peg.1638"/>
<dbReference type="eggNOG" id="COG0059">
    <property type="taxonomic scope" value="Bacteria"/>
</dbReference>
<dbReference type="OrthoDB" id="9804088at2"/>
<dbReference type="PhylomeDB" id="Q18C83"/>
<dbReference type="BioCyc" id="PDIF272563:G12WB-1703-MONOMER"/>
<dbReference type="UniPathway" id="UPA00047">
    <property type="reaction ID" value="UER00056"/>
</dbReference>
<dbReference type="UniPathway" id="UPA00049">
    <property type="reaction ID" value="UER00060"/>
</dbReference>
<dbReference type="Proteomes" id="UP000001978">
    <property type="component" value="Chromosome"/>
</dbReference>
<dbReference type="GO" id="GO:0005829">
    <property type="term" value="C:cytosol"/>
    <property type="evidence" value="ECO:0007669"/>
    <property type="project" value="TreeGrafter"/>
</dbReference>
<dbReference type="GO" id="GO:0004455">
    <property type="term" value="F:ketol-acid reductoisomerase activity"/>
    <property type="evidence" value="ECO:0007669"/>
    <property type="project" value="UniProtKB-UniRule"/>
</dbReference>
<dbReference type="GO" id="GO:0000287">
    <property type="term" value="F:magnesium ion binding"/>
    <property type="evidence" value="ECO:0007669"/>
    <property type="project" value="UniProtKB-UniRule"/>
</dbReference>
<dbReference type="GO" id="GO:0050661">
    <property type="term" value="F:NADP binding"/>
    <property type="evidence" value="ECO:0007669"/>
    <property type="project" value="InterPro"/>
</dbReference>
<dbReference type="GO" id="GO:0009097">
    <property type="term" value="P:isoleucine biosynthetic process"/>
    <property type="evidence" value="ECO:0007669"/>
    <property type="project" value="UniProtKB-UniRule"/>
</dbReference>
<dbReference type="GO" id="GO:0009099">
    <property type="term" value="P:L-valine biosynthetic process"/>
    <property type="evidence" value="ECO:0007669"/>
    <property type="project" value="UniProtKB-UniRule"/>
</dbReference>
<dbReference type="FunFam" id="3.40.50.720:FF:000023">
    <property type="entry name" value="Ketol-acid reductoisomerase (NADP(+))"/>
    <property type="match status" value="1"/>
</dbReference>
<dbReference type="Gene3D" id="6.10.240.10">
    <property type="match status" value="1"/>
</dbReference>
<dbReference type="Gene3D" id="3.40.50.720">
    <property type="entry name" value="NAD(P)-binding Rossmann-like Domain"/>
    <property type="match status" value="1"/>
</dbReference>
<dbReference type="HAMAP" id="MF_00435">
    <property type="entry name" value="IlvC"/>
    <property type="match status" value="1"/>
</dbReference>
<dbReference type="InterPro" id="IPR008927">
    <property type="entry name" value="6-PGluconate_DH-like_C_sf"/>
</dbReference>
<dbReference type="InterPro" id="IPR013023">
    <property type="entry name" value="KARI"/>
</dbReference>
<dbReference type="InterPro" id="IPR000506">
    <property type="entry name" value="KARI_C"/>
</dbReference>
<dbReference type="InterPro" id="IPR013116">
    <property type="entry name" value="KARI_N"/>
</dbReference>
<dbReference type="InterPro" id="IPR014359">
    <property type="entry name" value="KARI_prok"/>
</dbReference>
<dbReference type="InterPro" id="IPR036291">
    <property type="entry name" value="NAD(P)-bd_dom_sf"/>
</dbReference>
<dbReference type="NCBIfam" id="TIGR00465">
    <property type="entry name" value="ilvC"/>
    <property type="match status" value="1"/>
</dbReference>
<dbReference type="NCBIfam" id="NF004017">
    <property type="entry name" value="PRK05479.1"/>
    <property type="match status" value="1"/>
</dbReference>
<dbReference type="NCBIfam" id="NF009940">
    <property type="entry name" value="PRK13403.1"/>
    <property type="match status" value="1"/>
</dbReference>
<dbReference type="PANTHER" id="PTHR21371">
    <property type="entry name" value="KETOL-ACID REDUCTOISOMERASE, MITOCHONDRIAL"/>
    <property type="match status" value="1"/>
</dbReference>
<dbReference type="PANTHER" id="PTHR21371:SF1">
    <property type="entry name" value="KETOL-ACID REDUCTOISOMERASE, MITOCHONDRIAL"/>
    <property type="match status" value="1"/>
</dbReference>
<dbReference type="Pfam" id="PF01450">
    <property type="entry name" value="KARI_C"/>
    <property type="match status" value="1"/>
</dbReference>
<dbReference type="Pfam" id="PF07991">
    <property type="entry name" value="KARI_N"/>
    <property type="match status" value="1"/>
</dbReference>
<dbReference type="PIRSF" id="PIRSF000116">
    <property type="entry name" value="IlvC_gammaproteo"/>
    <property type="match status" value="1"/>
</dbReference>
<dbReference type="SUPFAM" id="SSF48179">
    <property type="entry name" value="6-phosphogluconate dehydrogenase C-terminal domain-like"/>
    <property type="match status" value="1"/>
</dbReference>
<dbReference type="SUPFAM" id="SSF51735">
    <property type="entry name" value="NAD(P)-binding Rossmann-fold domains"/>
    <property type="match status" value="1"/>
</dbReference>
<dbReference type="PROSITE" id="PS51851">
    <property type="entry name" value="KARI_C"/>
    <property type="match status" value="1"/>
</dbReference>
<dbReference type="PROSITE" id="PS51850">
    <property type="entry name" value="KARI_N"/>
    <property type="match status" value="1"/>
</dbReference>
<comment type="function">
    <text evidence="1">Involved in the biosynthesis of branched-chain amino acids (BCAA). Catalyzes an alkyl-migration followed by a ketol-acid reduction of (S)-2-acetolactate (S2AL) to yield (R)-2,3-dihydroxy-isovalerate. In the isomerase reaction, S2AL is rearranged via a Mg-dependent methyl migration to produce 3-hydroxy-3-methyl-2-ketobutyrate (HMKB). In the reductase reaction, this 2-ketoacid undergoes a metal-dependent reduction by NADPH to yield (R)-2,3-dihydroxy-isovalerate.</text>
</comment>
<comment type="catalytic activity">
    <reaction evidence="1">
        <text>(2R)-2,3-dihydroxy-3-methylbutanoate + NADP(+) = (2S)-2-acetolactate + NADPH + H(+)</text>
        <dbReference type="Rhea" id="RHEA:22068"/>
        <dbReference type="ChEBI" id="CHEBI:15378"/>
        <dbReference type="ChEBI" id="CHEBI:49072"/>
        <dbReference type="ChEBI" id="CHEBI:57783"/>
        <dbReference type="ChEBI" id="CHEBI:58349"/>
        <dbReference type="ChEBI" id="CHEBI:58476"/>
        <dbReference type="EC" id="1.1.1.86"/>
    </reaction>
</comment>
<comment type="catalytic activity">
    <reaction evidence="1">
        <text>(2R,3R)-2,3-dihydroxy-3-methylpentanoate + NADP(+) = (S)-2-ethyl-2-hydroxy-3-oxobutanoate + NADPH + H(+)</text>
        <dbReference type="Rhea" id="RHEA:13493"/>
        <dbReference type="ChEBI" id="CHEBI:15378"/>
        <dbReference type="ChEBI" id="CHEBI:49256"/>
        <dbReference type="ChEBI" id="CHEBI:49258"/>
        <dbReference type="ChEBI" id="CHEBI:57783"/>
        <dbReference type="ChEBI" id="CHEBI:58349"/>
        <dbReference type="EC" id="1.1.1.86"/>
    </reaction>
</comment>
<comment type="cofactor">
    <cofactor evidence="1">
        <name>Mg(2+)</name>
        <dbReference type="ChEBI" id="CHEBI:18420"/>
    </cofactor>
    <text evidence="1">Binds 2 magnesium ions per subunit.</text>
</comment>
<comment type="pathway">
    <text evidence="1">Amino-acid biosynthesis; L-isoleucine biosynthesis; L-isoleucine from 2-oxobutanoate: step 2/4.</text>
</comment>
<comment type="pathway">
    <text evidence="1">Amino-acid biosynthesis; L-valine biosynthesis; L-valine from pyruvate: step 2/4.</text>
</comment>
<comment type="similarity">
    <text evidence="1">Belongs to the ketol-acid reductoisomerase family.</text>
</comment>
<keyword id="KW-0028">Amino-acid biosynthesis</keyword>
<keyword id="KW-0100">Branched-chain amino acid biosynthesis</keyword>
<keyword id="KW-0460">Magnesium</keyword>
<keyword id="KW-0479">Metal-binding</keyword>
<keyword id="KW-0521">NADP</keyword>
<keyword id="KW-0560">Oxidoreductase</keyword>
<keyword id="KW-1185">Reference proteome</keyword>